<gene>
    <name type="primary">PP2B3</name>
    <name type="ordered locus">At2g02270</name>
    <name type="ORF">T16F16.6</name>
</gene>
<reference key="1">
    <citation type="journal article" date="1999" name="Nature">
        <title>Sequence and analysis of chromosome 2 of the plant Arabidopsis thaliana.</title>
        <authorList>
            <person name="Lin X."/>
            <person name="Kaul S."/>
            <person name="Rounsley S.D."/>
            <person name="Shea T.P."/>
            <person name="Benito M.-I."/>
            <person name="Town C.D."/>
            <person name="Fujii C.Y."/>
            <person name="Mason T.M."/>
            <person name="Bowman C.L."/>
            <person name="Barnstead M.E."/>
            <person name="Feldblyum T.V."/>
            <person name="Buell C.R."/>
            <person name="Ketchum K.A."/>
            <person name="Lee J.J."/>
            <person name="Ronning C.M."/>
            <person name="Koo H.L."/>
            <person name="Moffat K.S."/>
            <person name="Cronin L.A."/>
            <person name="Shen M."/>
            <person name="Pai G."/>
            <person name="Van Aken S."/>
            <person name="Umayam L."/>
            <person name="Tallon L.J."/>
            <person name="Gill J.E."/>
            <person name="Adams M.D."/>
            <person name="Carrera A.J."/>
            <person name="Creasy T.H."/>
            <person name="Goodman H.M."/>
            <person name="Somerville C.R."/>
            <person name="Copenhaver G.P."/>
            <person name="Preuss D."/>
            <person name="Nierman W.C."/>
            <person name="White O."/>
            <person name="Eisen J.A."/>
            <person name="Salzberg S.L."/>
            <person name="Fraser C.M."/>
            <person name="Venter J.C."/>
        </authorList>
    </citation>
    <scope>NUCLEOTIDE SEQUENCE [LARGE SCALE GENOMIC DNA]</scope>
    <source>
        <strain>cv. Columbia</strain>
    </source>
</reference>
<reference key="2">
    <citation type="journal article" date="2017" name="Plant J.">
        <title>Araport11: a complete reannotation of the Arabidopsis thaliana reference genome.</title>
        <authorList>
            <person name="Cheng C.Y."/>
            <person name="Krishnakumar V."/>
            <person name="Chan A.P."/>
            <person name="Thibaud-Nissen F."/>
            <person name="Schobel S."/>
            <person name="Town C.D."/>
        </authorList>
    </citation>
    <scope>GENOME REANNOTATION</scope>
    <source>
        <strain>cv. Columbia</strain>
    </source>
</reference>
<reference key="3">
    <citation type="submission" date="2005-03" db="EMBL/GenBank/DDBJ databases">
        <title>Large-scale analysis of RIKEN Arabidopsis full-length (RAFL) cDNAs.</title>
        <authorList>
            <person name="Totoki Y."/>
            <person name="Seki M."/>
            <person name="Ishida J."/>
            <person name="Nakajima M."/>
            <person name="Enju A."/>
            <person name="Kamiya A."/>
            <person name="Narusaka M."/>
            <person name="Shin-i T."/>
            <person name="Nakagawa M."/>
            <person name="Sakamoto N."/>
            <person name="Oishi K."/>
            <person name="Kohara Y."/>
            <person name="Kobayashi M."/>
            <person name="Toyoda A."/>
            <person name="Sakaki Y."/>
            <person name="Sakurai T."/>
            <person name="Iida K."/>
            <person name="Akiyama K."/>
            <person name="Satou M."/>
            <person name="Toyoda T."/>
            <person name="Konagaya A."/>
            <person name="Carninci P."/>
            <person name="Kawai J."/>
            <person name="Hayashizaki Y."/>
            <person name="Shinozaki K."/>
        </authorList>
    </citation>
    <scope>NUCLEOTIDE SEQUENCE [LARGE SCALE MRNA]</scope>
    <source>
        <strain>cv. Columbia</strain>
    </source>
</reference>
<reference key="4">
    <citation type="journal article" date="2003" name="Plant Physiol.">
        <title>Diversity of the superfamily of phloem lectins (phloem protein 2) in angiosperms.</title>
        <authorList>
            <person name="Dinant S."/>
            <person name="Clark A.M."/>
            <person name="Zhu Y."/>
            <person name="Vilaine F."/>
            <person name="Palauqui J.-C."/>
            <person name="Kusiak C."/>
            <person name="Thompson G.A."/>
        </authorList>
    </citation>
    <scope>GENE FAMILY</scope>
    <scope>NOMENCLATURE</scope>
</reference>
<sequence>MAQGEIVPRPSPFDGLPENCISNIISFTTPRDACFAASVSKAFESAVQSDSVWEKFLPLDYSSLVPESRVFLSKKELCFSLCRVPLLIEGGKKSFWLDKTSGEKCIMLSPKGMVISWVNSPQF</sequence>
<evidence type="ECO:0000255" key="1">
    <source>
        <dbReference type="PROSITE-ProRule" id="PRU00080"/>
    </source>
</evidence>
<evidence type="ECO:0000305" key="2"/>
<comment type="sequence caution" evidence="2">
    <conflict type="erroneous gene model prediction">
        <sequence resource="EMBL-CDS" id="AAC78510"/>
    </conflict>
</comment>
<keyword id="KW-1185">Reference proteome</keyword>
<feature type="chain" id="PRO_0000272213" description="F-box protein PP2-B3">
    <location>
        <begin position="1"/>
        <end position="123"/>
    </location>
</feature>
<feature type="domain" description="F-box" evidence="1">
    <location>
        <begin position="10"/>
        <end position="56"/>
    </location>
</feature>
<feature type="sequence conflict" description="In Ref. 3; BAD93729." evidence="2" ref="3">
    <original>I</original>
    <variation>V</variation>
    <location>
        <position position="115"/>
    </location>
</feature>
<accession>Q570N1</accession>
<accession>Q9ZVR4</accession>
<dbReference type="EMBL" id="AC005312">
    <property type="protein sequence ID" value="AAC78510.1"/>
    <property type="status" value="ALT_SEQ"/>
    <property type="molecule type" value="Genomic_DNA"/>
</dbReference>
<dbReference type="EMBL" id="CP002685">
    <property type="status" value="NOT_ANNOTATED_CDS"/>
    <property type="molecule type" value="Genomic_DNA"/>
</dbReference>
<dbReference type="EMBL" id="AK220677">
    <property type="protein sequence ID" value="BAD93729.1"/>
    <property type="molecule type" value="mRNA"/>
</dbReference>
<dbReference type="PIR" id="G84434">
    <property type="entry name" value="G84434"/>
</dbReference>
<dbReference type="FunCoup" id="Q570N1">
    <property type="interactions" value="65"/>
</dbReference>
<dbReference type="Araport" id="AT2G02270"/>
<dbReference type="TAIR" id="AT2G02270"/>
<dbReference type="InParanoid" id="Q570N1"/>
<dbReference type="PRO" id="PR:Q570N1"/>
<dbReference type="Proteomes" id="UP000006548">
    <property type="component" value="Chromosome 2"/>
</dbReference>
<dbReference type="ExpressionAtlas" id="Q570N1">
    <property type="expression patterns" value="baseline and differential"/>
</dbReference>
<dbReference type="CDD" id="cd22162">
    <property type="entry name" value="F-box_AtSKIP3-like"/>
    <property type="match status" value="1"/>
</dbReference>
<dbReference type="FunFam" id="1.20.1280.50:FF:000112">
    <property type="entry name" value="F-box protein PP2-B1"/>
    <property type="match status" value="1"/>
</dbReference>
<dbReference type="Gene3D" id="1.20.1280.50">
    <property type="match status" value="1"/>
</dbReference>
<dbReference type="InterPro" id="IPR036047">
    <property type="entry name" value="F-box-like_dom_sf"/>
</dbReference>
<dbReference type="InterPro" id="IPR001810">
    <property type="entry name" value="F-box_dom"/>
</dbReference>
<dbReference type="PANTHER" id="PTHR32278">
    <property type="entry name" value="F-BOX DOMAIN-CONTAINING PROTEIN"/>
    <property type="match status" value="1"/>
</dbReference>
<dbReference type="PANTHER" id="PTHR32278:SF57">
    <property type="entry name" value="F-BOX PROTEIN PP2-B2-RELATED"/>
    <property type="match status" value="1"/>
</dbReference>
<dbReference type="Pfam" id="PF00646">
    <property type="entry name" value="F-box"/>
    <property type="match status" value="1"/>
</dbReference>
<dbReference type="SMART" id="SM00256">
    <property type="entry name" value="FBOX"/>
    <property type="match status" value="1"/>
</dbReference>
<dbReference type="SUPFAM" id="SSF81383">
    <property type="entry name" value="F-box domain"/>
    <property type="match status" value="1"/>
</dbReference>
<dbReference type="PROSITE" id="PS50181">
    <property type="entry name" value="FBOX"/>
    <property type="match status" value="1"/>
</dbReference>
<organism>
    <name type="scientific">Arabidopsis thaliana</name>
    <name type="common">Mouse-ear cress</name>
    <dbReference type="NCBI Taxonomy" id="3702"/>
    <lineage>
        <taxon>Eukaryota</taxon>
        <taxon>Viridiplantae</taxon>
        <taxon>Streptophyta</taxon>
        <taxon>Embryophyta</taxon>
        <taxon>Tracheophyta</taxon>
        <taxon>Spermatophyta</taxon>
        <taxon>Magnoliopsida</taxon>
        <taxon>eudicotyledons</taxon>
        <taxon>Gunneridae</taxon>
        <taxon>Pentapetalae</taxon>
        <taxon>rosids</taxon>
        <taxon>malvids</taxon>
        <taxon>Brassicales</taxon>
        <taxon>Brassicaceae</taxon>
        <taxon>Camelineae</taxon>
        <taxon>Arabidopsis</taxon>
    </lineage>
</organism>
<protein>
    <recommendedName>
        <fullName>F-box protein PP2-B3</fullName>
    </recommendedName>
    <alternativeName>
        <fullName>Protein PHLOEM PROTEIN 2-LIKE B3</fullName>
        <shortName>AtPP2-B3</shortName>
    </alternativeName>
</protein>
<name>PP2B3_ARATH</name>
<proteinExistence type="evidence at transcript level"/>